<feature type="chain" id="PRO_0000276415" description="Large ribosomal subunit protein bL20c">
    <location>
        <begin position="1"/>
        <end position="117"/>
    </location>
</feature>
<protein>
    <recommendedName>
        <fullName evidence="1">Large ribosomal subunit protein bL20c</fullName>
    </recommendedName>
    <alternativeName>
        <fullName evidence="2">50S ribosomal protein L20, chloroplastic</fullName>
    </alternativeName>
</protein>
<comment type="function">
    <text evidence="1">Binds directly to 23S ribosomal RNA and is necessary for the in vitro assembly process of the 50S ribosomal subunit. It is not involved in the protein synthesizing functions of that subunit.</text>
</comment>
<comment type="subcellular location">
    <subcellularLocation>
        <location>Plastid</location>
        <location>Chloroplast</location>
    </subcellularLocation>
</comment>
<comment type="similarity">
    <text evidence="1">Belongs to the bacterial ribosomal protein bL20 family.</text>
</comment>
<sequence length="117" mass="14129">MTRIKRGYIARRRRTKIRLFASSFQGARSRLTRTITQQKIRALVSAHQDRGRQKRDFRRLWITRINAVIRANKVYYSYSTLIHHLYKRQLLLNRKILAQIAILNRNCLYMISNEILK</sequence>
<keyword id="KW-0150">Chloroplast</keyword>
<keyword id="KW-0934">Plastid</keyword>
<keyword id="KW-0687">Ribonucleoprotein</keyword>
<keyword id="KW-0689">Ribosomal protein</keyword>
<keyword id="KW-0694">RNA-binding</keyword>
<keyword id="KW-0699">rRNA-binding</keyword>
<evidence type="ECO:0000255" key="1">
    <source>
        <dbReference type="HAMAP-Rule" id="MF_00382"/>
    </source>
</evidence>
<evidence type="ECO:0000305" key="2"/>
<proteinExistence type="inferred from homology"/>
<dbReference type="EMBL" id="DQ226511">
    <property type="protein sequence ID" value="ABB20979.1"/>
    <property type="molecule type" value="Genomic_DNA"/>
</dbReference>
<dbReference type="RefSeq" id="YP_762284.1">
    <property type="nucleotide sequence ID" value="NC_008359.1"/>
</dbReference>
<dbReference type="SMR" id="Q09WZ4"/>
<dbReference type="GeneID" id="4290643"/>
<dbReference type="GO" id="GO:0009507">
    <property type="term" value="C:chloroplast"/>
    <property type="evidence" value="ECO:0007669"/>
    <property type="project" value="UniProtKB-SubCell"/>
</dbReference>
<dbReference type="GO" id="GO:1990904">
    <property type="term" value="C:ribonucleoprotein complex"/>
    <property type="evidence" value="ECO:0007669"/>
    <property type="project" value="UniProtKB-KW"/>
</dbReference>
<dbReference type="GO" id="GO:0005840">
    <property type="term" value="C:ribosome"/>
    <property type="evidence" value="ECO:0007669"/>
    <property type="project" value="UniProtKB-KW"/>
</dbReference>
<dbReference type="GO" id="GO:0019843">
    <property type="term" value="F:rRNA binding"/>
    <property type="evidence" value="ECO:0007669"/>
    <property type="project" value="UniProtKB-UniRule"/>
</dbReference>
<dbReference type="GO" id="GO:0003735">
    <property type="term" value="F:structural constituent of ribosome"/>
    <property type="evidence" value="ECO:0007669"/>
    <property type="project" value="InterPro"/>
</dbReference>
<dbReference type="GO" id="GO:0000027">
    <property type="term" value="P:ribosomal large subunit assembly"/>
    <property type="evidence" value="ECO:0007669"/>
    <property type="project" value="UniProtKB-UniRule"/>
</dbReference>
<dbReference type="GO" id="GO:0006412">
    <property type="term" value="P:translation"/>
    <property type="evidence" value="ECO:0007669"/>
    <property type="project" value="InterPro"/>
</dbReference>
<dbReference type="CDD" id="cd07026">
    <property type="entry name" value="Ribosomal_L20"/>
    <property type="match status" value="1"/>
</dbReference>
<dbReference type="FunFam" id="1.10.1900.20:FF:000001">
    <property type="entry name" value="50S ribosomal protein L20"/>
    <property type="match status" value="1"/>
</dbReference>
<dbReference type="Gene3D" id="6.10.160.10">
    <property type="match status" value="1"/>
</dbReference>
<dbReference type="Gene3D" id="1.10.1900.20">
    <property type="entry name" value="Ribosomal protein L20"/>
    <property type="match status" value="1"/>
</dbReference>
<dbReference type="HAMAP" id="MF_00382">
    <property type="entry name" value="Ribosomal_bL20"/>
    <property type="match status" value="1"/>
</dbReference>
<dbReference type="InterPro" id="IPR005813">
    <property type="entry name" value="Ribosomal_bL20"/>
</dbReference>
<dbReference type="InterPro" id="IPR049946">
    <property type="entry name" value="RIBOSOMAL_L20_CS"/>
</dbReference>
<dbReference type="InterPro" id="IPR035566">
    <property type="entry name" value="Ribosomal_protein_bL20_C"/>
</dbReference>
<dbReference type="NCBIfam" id="TIGR01032">
    <property type="entry name" value="rplT_bact"/>
    <property type="match status" value="1"/>
</dbReference>
<dbReference type="PANTHER" id="PTHR10986">
    <property type="entry name" value="39S RIBOSOMAL PROTEIN L20"/>
    <property type="match status" value="1"/>
</dbReference>
<dbReference type="Pfam" id="PF00453">
    <property type="entry name" value="Ribosomal_L20"/>
    <property type="match status" value="1"/>
</dbReference>
<dbReference type="PRINTS" id="PR00062">
    <property type="entry name" value="RIBOSOMALL20"/>
</dbReference>
<dbReference type="SUPFAM" id="SSF74731">
    <property type="entry name" value="Ribosomal protein L20"/>
    <property type="match status" value="1"/>
</dbReference>
<dbReference type="PROSITE" id="PS00937">
    <property type="entry name" value="RIBOSOMAL_L20"/>
    <property type="match status" value="1"/>
</dbReference>
<gene>
    <name evidence="1" type="primary">rpl20</name>
    <name type="ordered locus">MoinCp044</name>
</gene>
<geneLocation type="chloroplast"/>
<name>RK20_MORIN</name>
<reference key="1">
    <citation type="submission" date="2005-09" db="EMBL/GenBank/DDBJ databases">
        <title>The chloroplast genome of mulberry: structural features and comparative analysis.</title>
        <authorList>
            <person name="Ravi V."/>
            <person name="Khurana J.P."/>
            <person name="Tyagi A.K."/>
            <person name="Khurana P."/>
        </authorList>
    </citation>
    <scope>NUCLEOTIDE SEQUENCE [LARGE SCALE GENOMIC DNA]</scope>
    <source>
        <strain>cv. K2</strain>
    </source>
</reference>
<accession>Q09WZ4</accession>
<organism>
    <name type="scientific">Morus indica</name>
    <name type="common">Mulberry</name>
    <dbReference type="NCBI Taxonomy" id="248361"/>
    <lineage>
        <taxon>Eukaryota</taxon>
        <taxon>Viridiplantae</taxon>
        <taxon>Streptophyta</taxon>
        <taxon>Embryophyta</taxon>
        <taxon>Tracheophyta</taxon>
        <taxon>Spermatophyta</taxon>
        <taxon>Magnoliopsida</taxon>
        <taxon>eudicotyledons</taxon>
        <taxon>Gunneridae</taxon>
        <taxon>Pentapetalae</taxon>
        <taxon>rosids</taxon>
        <taxon>fabids</taxon>
        <taxon>Rosales</taxon>
        <taxon>Moraceae</taxon>
        <taxon>Moreae</taxon>
        <taxon>Morus</taxon>
    </lineage>
</organism>